<organism>
    <name type="scientific">Methanoregula boonei (strain DSM 21154 / JCM 14090 / 6A8)</name>
    <dbReference type="NCBI Taxonomy" id="456442"/>
    <lineage>
        <taxon>Archaea</taxon>
        <taxon>Methanobacteriati</taxon>
        <taxon>Methanobacteriota</taxon>
        <taxon>Stenosarchaea group</taxon>
        <taxon>Methanomicrobia</taxon>
        <taxon>Methanomicrobiales</taxon>
        <taxon>Methanoregulaceae</taxon>
        <taxon>Methanoregula</taxon>
    </lineage>
</organism>
<comment type="function">
    <text evidence="1">Catalyzes the ATP-dependent conversion of 7-carboxy-7-deazaguanine (CDG) to 7-cyano-7-deazaguanine (preQ(0)).</text>
</comment>
<comment type="catalytic activity">
    <reaction evidence="1">
        <text>7-carboxy-7-deazaguanine + NH4(+) + ATP = 7-cyano-7-deazaguanine + ADP + phosphate + H2O + H(+)</text>
        <dbReference type="Rhea" id="RHEA:27982"/>
        <dbReference type="ChEBI" id="CHEBI:15377"/>
        <dbReference type="ChEBI" id="CHEBI:15378"/>
        <dbReference type="ChEBI" id="CHEBI:28938"/>
        <dbReference type="ChEBI" id="CHEBI:30616"/>
        <dbReference type="ChEBI" id="CHEBI:43474"/>
        <dbReference type="ChEBI" id="CHEBI:45075"/>
        <dbReference type="ChEBI" id="CHEBI:61036"/>
        <dbReference type="ChEBI" id="CHEBI:456216"/>
        <dbReference type="EC" id="6.3.4.20"/>
    </reaction>
</comment>
<comment type="cofactor">
    <cofactor evidence="1">
        <name>Zn(2+)</name>
        <dbReference type="ChEBI" id="CHEBI:29105"/>
    </cofactor>
    <text evidence="1">Binds 1 zinc ion per subunit.</text>
</comment>
<comment type="pathway">
    <text evidence="1">Purine metabolism; 7-cyano-7-deazaguanine biosynthesis.</text>
</comment>
<comment type="similarity">
    <text evidence="1">Belongs to the QueC family.</text>
</comment>
<sequence>MKAVLILSGGMDSTTLLYDLIDQGYEVSAITFDYHQKHKKEIACAQKTCAKLSIPHKIVNLSVLNDLAPSSLTRADRDVPEGHYAEESMKQTVVPNRNMVFLSLAASYAIGIGAGHLFYAAHAGDHAIYPDCRPVFVSAMSTAFHLCDWNDLVLQVPYLMLSKGDIAKKGIGLGVDYANTWSCYKGKERSCGKCGACTERLEAFREAGAADPLEYEP</sequence>
<feature type="chain" id="PRO_1000069778" description="7-cyano-7-deazaguanine synthase">
    <location>
        <begin position="1"/>
        <end position="217"/>
    </location>
</feature>
<feature type="binding site" evidence="1">
    <location>
        <begin position="7"/>
        <end position="17"/>
    </location>
    <ligand>
        <name>ATP</name>
        <dbReference type="ChEBI" id="CHEBI:30616"/>
    </ligand>
</feature>
<feature type="binding site" evidence="1">
    <location>
        <position position="183"/>
    </location>
    <ligand>
        <name>Zn(2+)</name>
        <dbReference type="ChEBI" id="CHEBI:29105"/>
    </ligand>
</feature>
<feature type="binding site" evidence="1">
    <location>
        <position position="191"/>
    </location>
    <ligand>
        <name>Zn(2+)</name>
        <dbReference type="ChEBI" id="CHEBI:29105"/>
    </ligand>
</feature>
<feature type="binding site" evidence="1">
    <location>
        <position position="194"/>
    </location>
    <ligand>
        <name>Zn(2+)</name>
        <dbReference type="ChEBI" id="CHEBI:29105"/>
    </ligand>
</feature>
<feature type="binding site" evidence="1">
    <location>
        <position position="197"/>
    </location>
    <ligand>
        <name>Zn(2+)</name>
        <dbReference type="ChEBI" id="CHEBI:29105"/>
    </ligand>
</feature>
<protein>
    <recommendedName>
        <fullName evidence="1">7-cyano-7-deazaguanine synthase</fullName>
        <ecNumber evidence="1">6.3.4.20</ecNumber>
    </recommendedName>
    <alternativeName>
        <fullName evidence="1">7-cyano-7-carbaguanine synthase</fullName>
    </alternativeName>
    <alternativeName>
        <fullName evidence="1">Archaeosine biosynthesis protein QueC</fullName>
    </alternativeName>
    <alternativeName>
        <fullName evidence="1">PreQ(0) synthase</fullName>
    </alternativeName>
</protein>
<dbReference type="EC" id="6.3.4.20" evidence="1"/>
<dbReference type="EMBL" id="CP000780">
    <property type="protein sequence ID" value="ABS55615.1"/>
    <property type="molecule type" value="Genomic_DNA"/>
</dbReference>
<dbReference type="SMR" id="A7I7A4"/>
<dbReference type="STRING" id="456442.Mboo_1097"/>
<dbReference type="KEGG" id="mbn:Mboo_1097"/>
<dbReference type="eggNOG" id="arCOG00039">
    <property type="taxonomic scope" value="Archaea"/>
</dbReference>
<dbReference type="HOGENOM" id="CLU_081854_1_0_2"/>
<dbReference type="OrthoDB" id="6532at2157"/>
<dbReference type="UniPathway" id="UPA00391"/>
<dbReference type="Proteomes" id="UP000002408">
    <property type="component" value="Chromosome"/>
</dbReference>
<dbReference type="GO" id="GO:0005524">
    <property type="term" value="F:ATP binding"/>
    <property type="evidence" value="ECO:0007669"/>
    <property type="project" value="UniProtKB-UniRule"/>
</dbReference>
<dbReference type="GO" id="GO:0016879">
    <property type="term" value="F:ligase activity, forming carbon-nitrogen bonds"/>
    <property type="evidence" value="ECO:0007669"/>
    <property type="project" value="UniProtKB-UniRule"/>
</dbReference>
<dbReference type="GO" id="GO:0008270">
    <property type="term" value="F:zinc ion binding"/>
    <property type="evidence" value="ECO:0007669"/>
    <property type="project" value="UniProtKB-UniRule"/>
</dbReference>
<dbReference type="CDD" id="cd01995">
    <property type="entry name" value="QueC-like"/>
    <property type="match status" value="1"/>
</dbReference>
<dbReference type="Gene3D" id="3.40.50.620">
    <property type="entry name" value="HUPs"/>
    <property type="match status" value="1"/>
</dbReference>
<dbReference type="HAMAP" id="MF_01633">
    <property type="entry name" value="QueC"/>
    <property type="match status" value="1"/>
</dbReference>
<dbReference type="InterPro" id="IPR018317">
    <property type="entry name" value="QueC"/>
</dbReference>
<dbReference type="InterPro" id="IPR014729">
    <property type="entry name" value="Rossmann-like_a/b/a_fold"/>
</dbReference>
<dbReference type="NCBIfam" id="TIGR00364">
    <property type="entry name" value="7-cyano-7-deazaguanine synthase QueC"/>
    <property type="match status" value="1"/>
</dbReference>
<dbReference type="PANTHER" id="PTHR42914">
    <property type="entry name" value="7-CYANO-7-DEAZAGUANINE SYNTHASE"/>
    <property type="match status" value="1"/>
</dbReference>
<dbReference type="PANTHER" id="PTHR42914:SF1">
    <property type="entry name" value="7-CYANO-7-DEAZAGUANINE SYNTHASE"/>
    <property type="match status" value="1"/>
</dbReference>
<dbReference type="Pfam" id="PF06508">
    <property type="entry name" value="QueC"/>
    <property type="match status" value="1"/>
</dbReference>
<dbReference type="PIRSF" id="PIRSF006293">
    <property type="entry name" value="ExsB"/>
    <property type="match status" value="1"/>
</dbReference>
<dbReference type="SUPFAM" id="SSF52402">
    <property type="entry name" value="Adenine nucleotide alpha hydrolases-like"/>
    <property type="match status" value="1"/>
</dbReference>
<name>QUEC_METB6</name>
<proteinExistence type="inferred from homology"/>
<gene>
    <name evidence="1" type="primary">queC</name>
    <name type="ordered locus">Mboo_1097</name>
</gene>
<reference key="1">
    <citation type="journal article" date="2015" name="Microbiology">
        <title>Genome of Methanoregula boonei 6A8 reveals adaptations to oligotrophic peatland environments.</title>
        <authorList>
            <person name="Braeuer S."/>
            <person name="Cadillo-Quiroz H."/>
            <person name="Kyrpides N."/>
            <person name="Woyke T."/>
            <person name="Goodwin L."/>
            <person name="Detter C."/>
            <person name="Podell S."/>
            <person name="Yavitt J.B."/>
            <person name="Zinder S.H."/>
        </authorList>
    </citation>
    <scope>NUCLEOTIDE SEQUENCE [LARGE SCALE GENOMIC DNA]</scope>
    <source>
        <strain>DSM 21154 / JCM 14090 / 6A8</strain>
    </source>
</reference>
<accession>A7I7A4</accession>
<keyword id="KW-0067">ATP-binding</keyword>
<keyword id="KW-0436">Ligase</keyword>
<keyword id="KW-0479">Metal-binding</keyword>
<keyword id="KW-0547">Nucleotide-binding</keyword>
<keyword id="KW-1185">Reference proteome</keyword>
<keyword id="KW-0862">Zinc</keyword>
<evidence type="ECO:0000255" key="1">
    <source>
        <dbReference type="HAMAP-Rule" id="MF_01633"/>
    </source>
</evidence>